<feature type="initiator methionine" description="Removed" evidence="2">
    <location>
        <position position="1"/>
    </location>
</feature>
<feature type="chain" id="PRO_0000205874" description="Cell division topological specificity factor">
    <location>
        <begin position="2"/>
        <end position="88"/>
    </location>
</feature>
<feature type="helix" evidence="5">
    <location>
        <begin position="14"/>
        <end position="25"/>
    </location>
</feature>
<feature type="helix" evidence="4">
    <location>
        <begin position="32"/>
        <end position="34"/>
    </location>
</feature>
<feature type="helix" evidence="4">
    <location>
        <begin position="39"/>
        <end position="53"/>
    </location>
</feature>
<feature type="helix" evidence="4">
    <location>
        <begin position="58"/>
        <end position="60"/>
    </location>
</feature>
<feature type="strand" evidence="4">
    <location>
        <begin position="61"/>
        <end position="68"/>
    </location>
</feature>
<feature type="turn" evidence="4">
    <location>
        <begin position="69"/>
        <end position="71"/>
    </location>
</feature>
<feature type="strand" evidence="4">
    <location>
        <begin position="72"/>
        <end position="81"/>
    </location>
</feature>
<protein>
    <recommendedName>
        <fullName>Cell division topological specificity factor</fullName>
    </recommendedName>
</protein>
<dbReference type="EMBL" id="J03153">
    <property type="protein sequence ID" value="AAB59063.1"/>
    <property type="molecule type" value="Genomic_DNA"/>
</dbReference>
<dbReference type="EMBL" id="U00096">
    <property type="protein sequence ID" value="AAC74258.1"/>
    <property type="molecule type" value="Genomic_DNA"/>
</dbReference>
<dbReference type="EMBL" id="AP009048">
    <property type="protein sequence ID" value="BAA36008.1"/>
    <property type="molecule type" value="Genomic_DNA"/>
</dbReference>
<dbReference type="PIR" id="C31877">
    <property type="entry name" value="CEECTF"/>
</dbReference>
<dbReference type="RefSeq" id="NP_415692.1">
    <property type="nucleotide sequence ID" value="NC_000913.3"/>
</dbReference>
<dbReference type="RefSeq" id="WP_001185665.1">
    <property type="nucleotide sequence ID" value="NZ_STEB01000023.1"/>
</dbReference>
<dbReference type="PDB" id="1EV0">
    <property type="method" value="NMR"/>
    <property type="chains" value="A/B=31-88"/>
</dbReference>
<dbReference type="PDB" id="3R9I">
    <property type="method" value="X-ray"/>
    <property type="resolution" value="2.60 A"/>
    <property type="chains" value="E/F/G/H=12-31"/>
</dbReference>
<dbReference type="PDB" id="3R9J">
    <property type="method" value="X-ray"/>
    <property type="resolution" value="4.30 A"/>
    <property type="chains" value="C/D=12-88"/>
</dbReference>
<dbReference type="PDBsum" id="1EV0"/>
<dbReference type="PDBsum" id="3R9I"/>
<dbReference type="PDBsum" id="3R9J"/>
<dbReference type="SMR" id="P0A734"/>
<dbReference type="BioGRID" id="4262867">
    <property type="interactions" value="350"/>
</dbReference>
<dbReference type="BioGRID" id="850107">
    <property type="interactions" value="4"/>
</dbReference>
<dbReference type="DIP" id="DIP-35912N"/>
<dbReference type="FunCoup" id="P0A734">
    <property type="interactions" value="176"/>
</dbReference>
<dbReference type="IntAct" id="P0A734">
    <property type="interactions" value="19"/>
</dbReference>
<dbReference type="STRING" id="511145.b1174"/>
<dbReference type="jPOST" id="P0A734"/>
<dbReference type="PaxDb" id="511145-b1174"/>
<dbReference type="EnsemblBacteria" id="AAC74258">
    <property type="protein sequence ID" value="AAC74258"/>
    <property type="gene ID" value="b1174"/>
</dbReference>
<dbReference type="GeneID" id="93776260"/>
<dbReference type="GeneID" id="945740"/>
<dbReference type="KEGG" id="ecj:JW1163"/>
<dbReference type="KEGG" id="eco:b1174"/>
<dbReference type="KEGG" id="ecoc:C3026_06920"/>
<dbReference type="PATRIC" id="fig|1411691.4.peg.1114"/>
<dbReference type="EchoBASE" id="EB0593"/>
<dbReference type="eggNOG" id="COG0851">
    <property type="taxonomic scope" value="Bacteria"/>
</dbReference>
<dbReference type="HOGENOM" id="CLU_137929_2_2_6"/>
<dbReference type="InParanoid" id="P0A734"/>
<dbReference type="OMA" id="FNKQRTA"/>
<dbReference type="OrthoDB" id="9802655at2"/>
<dbReference type="PhylomeDB" id="P0A734"/>
<dbReference type="BioCyc" id="EcoCyc:EG10598-MONOMER"/>
<dbReference type="EvolutionaryTrace" id="P0A734"/>
<dbReference type="PRO" id="PR:P0A734"/>
<dbReference type="Proteomes" id="UP000000625">
    <property type="component" value="Chromosome"/>
</dbReference>
<dbReference type="GO" id="GO:0005829">
    <property type="term" value="C:cytosol"/>
    <property type="evidence" value="ECO:0000314"/>
    <property type="project" value="EcoCyc"/>
</dbReference>
<dbReference type="GO" id="GO:0005886">
    <property type="term" value="C:plasma membrane"/>
    <property type="evidence" value="ECO:0000314"/>
    <property type="project" value="EcoCyc"/>
</dbReference>
<dbReference type="GO" id="GO:0001671">
    <property type="term" value="F:ATPase activator activity"/>
    <property type="evidence" value="ECO:0000314"/>
    <property type="project" value="EcoCyc"/>
</dbReference>
<dbReference type="GO" id="GO:0042802">
    <property type="term" value="F:identical protein binding"/>
    <property type="evidence" value="ECO:0000314"/>
    <property type="project" value="EcoCyc"/>
</dbReference>
<dbReference type="GO" id="GO:0000918">
    <property type="term" value="P:division septum site selection"/>
    <property type="evidence" value="ECO:0000314"/>
    <property type="project" value="EcoCyc"/>
</dbReference>
<dbReference type="GO" id="GO:0032955">
    <property type="term" value="P:regulation of division septum assembly"/>
    <property type="evidence" value="ECO:0007669"/>
    <property type="project" value="InterPro"/>
</dbReference>
<dbReference type="FunFam" id="3.30.1070.10:FF:000001">
    <property type="entry name" value="Cell division topological specificity factor"/>
    <property type="match status" value="1"/>
</dbReference>
<dbReference type="Gene3D" id="3.30.1070.10">
    <property type="entry name" value="Cell division topological specificity factor MinE"/>
    <property type="match status" value="1"/>
</dbReference>
<dbReference type="HAMAP" id="MF_00262">
    <property type="entry name" value="MinE"/>
    <property type="match status" value="1"/>
</dbReference>
<dbReference type="InterPro" id="IPR005527">
    <property type="entry name" value="MinE"/>
</dbReference>
<dbReference type="InterPro" id="IPR036707">
    <property type="entry name" value="MinE_sf"/>
</dbReference>
<dbReference type="NCBIfam" id="TIGR01215">
    <property type="entry name" value="minE"/>
    <property type="match status" value="1"/>
</dbReference>
<dbReference type="NCBIfam" id="NF001422">
    <property type="entry name" value="PRK00296.1"/>
    <property type="match status" value="1"/>
</dbReference>
<dbReference type="Pfam" id="PF03776">
    <property type="entry name" value="MinE"/>
    <property type="match status" value="1"/>
</dbReference>
<dbReference type="SUPFAM" id="SSF55229">
    <property type="entry name" value="Cell division protein MinE topological specificity domain"/>
    <property type="match status" value="1"/>
</dbReference>
<name>MINE_ECOLI</name>
<gene>
    <name type="primary">minE</name>
    <name type="ordered locus">b1174</name>
    <name type="ordered locus">JW1163</name>
</gene>
<evidence type="ECO:0000269" key="1">
    <source>
    </source>
</evidence>
<evidence type="ECO:0000269" key="2">
    <source>
    </source>
</evidence>
<evidence type="ECO:0000305" key="3"/>
<evidence type="ECO:0007829" key="4">
    <source>
        <dbReference type="PDB" id="1EV0"/>
    </source>
</evidence>
<evidence type="ECO:0007829" key="5">
    <source>
        <dbReference type="PDB" id="3R9I"/>
    </source>
</evidence>
<accession>P0A734</accession>
<accession>P18198</accession>
<reference key="1">
    <citation type="journal article" date="1989" name="Cell">
        <title>A division inhibitor and a topological specificity factor coded for by the minicell locus determine proper placement of the division septum in E. coli.</title>
        <authorList>
            <person name="de Boer P.A.J."/>
            <person name="Crossley R.E."/>
            <person name="Rothfield L.I."/>
        </authorList>
    </citation>
    <scope>NUCLEOTIDE SEQUENCE [GENOMIC DNA]</scope>
</reference>
<reference key="2">
    <citation type="journal article" date="1996" name="DNA Res.">
        <title>A 718-kb DNA sequence of the Escherichia coli K-12 genome corresponding to the 12.7-28.0 min region on the linkage map.</title>
        <authorList>
            <person name="Oshima T."/>
            <person name="Aiba H."/>
            <person name="Baba T."/>
            <person name="Fujita K."/>
            <person name="Hayashi K."/>
            <person name="Honjo A."/>
            <person name="Ikemoto K."/>
            <person name="Inada T."/>
            <person name="Itoh T."/>
            <person name="Kajihara M."/>
            <person name="Kanai K."/>
            <person name="Kashimoto K."/>
            <person name="Kimura S."/>
            <person name="Kitagawa M."/>
            <person name="Makino K."/>
            <person name="Masuda S."/>
            <person name="Miki T."/>
            <person name="Mizobuchi K."/>
            <person name="Mori H."/>
            <person name="Motomura K."/>
            <person name="Nakamura Y."/>
            <person name="Nashimoto H."/>
            <person name="Nishio Y."/>
            <person name="Saito N."/>
            <person name="Sampei G."/>
            <person name="Seki Y."/>
            <person name="Tagami H."/>
            <person name="Takemoto K."/>
            <person name="Wada C."/>
            <person name="Yamamoto Y."/>
            <person name="Yano M."/>
            <person name="Horiuchi T."/>
        </authorList>
    </citation>
    <scope>NUCLEOTIDE SEQUENCE [LARGE SCALE GENOMIC DNA]</scope>
    <source>
        <strain>K12 / W3110 / ATCC 27325 / DSM 5911</strain>
    </source>
</reference>
<reference key="3">
    <citation type="journal article" date="1997" name="Science">
        <title>The complete genome sequence of Escherichia coli K-12.</title>
        <authorList>
            <person name="Blattner F.R."/>
            <person name="Plunkett G. III"/>
            <person name="Bloch C.A."/>
            <person name="Perna N.T."/>
            <person name="Burland V."/>
            <person name="Riley M."/>
            <person name="Collado-Vides J."/>
            <person name="Glasner J.D."/>
            <person name="Rode C.K."/>
            <person name="Mayhew G.F."/>
            <person name="Gregor J."/>
            <person name="Davis N.W."/>
            <person name="Kirkpatrick H.A."/>
            <person name="Goeden M.A."/>
            <person name="Rose D.J."/>
            <person name="Mau B."/>
            <person name="Shao Y."/>
        </authorList>
    </citation>
    <scope>NUCLEOTIDE SEQUENCE [LARGE SCALE GENOMIC DNA]</scope>
    <source>
        <strain>K12 / MG1655 / ATCC 47076</strain>
    </source>
</reference>
<reference key="4">
    <citation type="journal article" date="2006" name="Mol. Syst. Biol.">
        <title>Highly accurate genome sequences of Escherichia coli K-12 strains MG1655 and W3110.</title>
        <authorList>
            <person name="Hayashi K."/>
            <person name="Morooka N."/>
            <person name="Yamamoto Y."/>
            <person name="Fujita K."/>
            <person name="Isono K."/>
            <person name="Choi S."/>
            <person name="Ohtsubo E."/>
            <person name="Baba T."/>
            <person name="Wanner B.L."/>
            <person name="Mori H."/>
            <person name="Horiuchi T."/>
        </authorList>
    </citation>
    <scope>NUCLEOTIDE SEQUENCE [LARGE SCALE GENOMIC DNA]</scope>
    <source>
        <strain>K12 / W3110 / ATCC 27325 / DSM 5911</strain>
    </source>
</reference>
<reference key="5">
    <citation type="journal article" date="2015" name="Proteomics">
        <title>Proteome-wide analysis of the amino terminal status of Escherichia coli proteins at the steady-state and upon deformylation inhibition.</title>
        <authorList>
            <person name="Bienvenut W.V."/>
            <person name="Giglione C."/>
            <person name="Meinnel T."/>
        </authorList>
    </citation>
    <scope>CLEAVAGE OF INITIATOR METHIONINE</scope>
    <source>
        <strain>K12 / CAG12184</strain>
        <strain>K12 / PAL421Tr</strain>
    </source>
</reference>
<reference key="6">
    <citation type="journal article" date="2012" name="Mol. Microbiol.">
        <title>Isolation and identification of new inner membrane-associated proteins that localize to cell poles in Escherichia coli.</title>
        <authorList>
            <person name="Li G."/>
            <person name="Young K.D."/>
        </authorList>
    </citation>
    <scope>FUNCTION IN SUBCELLULAR LOCATION AT CELL POLES</scope>
    <scope>DISRUPTION PHENOTYPE</scope>
    <source>
        <strain>K12 / MG1655 / ATCC 47076</strain>
    </source>
</reference>
<sequence length="88" mass="10235">MALLDFFLSRKKNTANIAKERLQIIVAERRRSDAEPHYLPQLRKDILEVICKYVQIDPEMVTVQLEQKDGDISILELNVTLPEAEELK</sequence>
<proteinExistence type="evidence at protein level"/>
<comment type="function">
    <text evidence="1">Prevents the cell division inhibition by proteins MinC and MinD at internal division sites while permitting inhibition at polar sites. This ensures cell division at the proper site by restricting the formation of a division septum at the midpoint of the long axis of the cell.</text>
</comment>
<comment type="interaction">
    <interactant intactId="EBI-1118020">
        <id>P0A734</id>
    </interactant>
    <interactant intactId="EBI-554545">
        <id>P0AEZ3</id>
        <label>minD</label>
    </interactant>
    <organismsDiffer>false</organismsDiffer>
    <experiments>4</experiments>
</comment>
<comment type="interaction">
    <interactant intactId="EBI-1118020">
        <id>P0A734</id>
    </interactant>
    <interactant intactId="EBI-1118020">
        <id>P0A734</id>
        <label>minE</label>
    </interactant>
    <organismsDiffer>false</organismsDiffer>
    <experiments>4</experiments>
</comment>
<comment type="disruption phenotype">
    <text evidence="1">In a minCDE operon disruption (minC-minD-minE), cells divide not only at midpoint but also at their poles, yielding small minicells and long rods. Loss of polar localization of several polar-localized proteins including GroEL-GroES, TnaA and YqjD.</text>
</comment>
<comment type="similarity">
    <text evidence="3">Belongs to the MinE family.</text>
</comment>
<keyword id="KW-0002">3D-structure</keyword>
<keyword id="KW-0131">Cell cycle</keyword>
<keyword id="KW-0132">Cell division</keyword>
<keyword id="KW-1185">Reference proteome</keyword>
<organism>
    <name type="scientific">Escherichia coli (strain K12)</name>
    <dbReference type="NCBI Taxonomy" id="83333"/>
    <lineage>
        <taxon>Bacteria</taxon>
        <taxon>Pseudomonadati</taxon>
        <taxon>Pseudomonadota</taxon>
        <taxon>Gammaproteobacteria</taxon>
        <taxon>Enterobacterales</taxon>
        <taxon>Enterobacteriaceae</taxon>
        <taxon>Escherichia</taxon>
    </lineage>
</organism>